<accession>Q9JHK5</accession>
<accession>Q9ERI9</accession>
<organism>
    <name type="scientific">Mus musculus</name>
    <name type="common">Mouse</name>
    <dbReference type="NCBI Taxonomy" id="10090"/>
    <lineage>
        <taxon>Eukaryota</taxon>
        <taxon>Metazoa</taxon>
        <taxon>Chordata</taxon>
        <taxon>Craniata</taxon>
        <taxon>Vertebrata</taxon>
        <taxon>Euteleostomi</taxon>
        <taxon>Mammalia</taxon>
        <taxon>Eutheria</taxon>
        <taxon>Euarchontoglires</taxon>
        <taxon>Glires</taxon>
        <taxon>Rodentia</taxon>
        <taxon>Myomorpha</taxon>
        <taxon>Muroidea</taxon>
        <taxon>Muridae</taxon>
        <taxon>Murinae</taxon>
        <taxon>Mus</taxon>
        <taxon>Mus</taxon>
    </lineage>
</organism>
<proteinExistence type="evidence at protein level"/>
<reference key="1">
    <citation type="journal article" date="2000" name="Genomics">
        <title>cDNA cloning and mapping of mouse pleckstrin (Plek), a gene upregulated in transformation-resistant cells.</title>
        <authorList>
            <person name="Cmarik J.L."/>
            <person name="Hegamyer G."/>
            <person name="Gerrard B."/>
            <person name="Dean M."/>
            <person name="Colburn N.H."/>
        </authorList>
    </citation>
    <scope>NUCLEOTIDE SEQUENCE [MRNA]</scope>
    <source>
        <strain>BALB/cJ</strain>
    </source>
</reference>
<reference key="2">
    <citation type="submission" date="1998-06" db="EMBL/GenBank/DDBJ databases">
        <title>Involvement of pleckstrin in B cell differentiation and activation.</title>
        <authorList>
            <person name="Zhang Y."/>
            <person name="Wu G."/>
            <person name="Paige C.J."/>
        </authorList>
    </citation>
    <scope>NUCLEOTIDE SEQUENCE [MRNA]</scope>
</reference>
<reference key="3">
    <citation type="submission" date="2000-09" db="EMBL/GenBank/DDBJ databases">
        <title>Mouse pleckstrin 1 is induced in mast cells after IgE cross-linking.</title>
        <authorList>
            <person name="Ahn H.-J."/>
            <person name="Cho J.-J."/>
        </authorList>
    </citation>
    <scope>NUCLEOTIDE SEQUENCE [MRNA]</scope>
</reference>
<reference key="4">
    <citation type="journal article" date="2004" name="Genome Res.">
        <title>The status, quality, and expansion of the NIH full-length cDNA project: the Mammalian Gene Collection (MGC).</title>
        <authorList>
            <consortium name="The MGC Project Team"/>
        </authorList>
    </citation>
    <scope>NUCLEOTIDE SEQUENCE [LARGE SCALE MRNA]</scope>
    <source>
        <strain>C57BL/6J</strain>
        <tissue>Embryo</tissue>
    </source>
</reference>
<reference key="5">
    <citation type="journal article" date="2010" name="Cell">
        <title>A tissue-specific atlas of mouse protein phosphorylation and expression.</title>
        <authorList>
            <person name="Huttlin E.L."/>
            <person name="Jedrychowski M.P."/>
            <person name="Elias J.E."/>
            <person name="Goswami T."/>
            <person name="Rad R."/>
            <person name="Beausoleil S.A."/>
            <person name="Villen J."/>
            <person name="Haas W."/>
            <person name="Sowa M.E."/>
            <person name="Gygi S.P."/>
        </authorList>
    </citation>
    <scope>PHOSPHORYLATION [LARGE SCALE ANALYSIS] AT SER-117</scope>
    <scope>IDENTIFICATION BY MASS SPECTROMETRY [LARGE SCALE ANALYSIS]</scope>
    <source>
        <tissue>Heart</tissue>
        <tissue>Lung</tissue>
        <tissue>Spleen</tissue>
        <tissue>Testis</tissue>
    </source>
</reference>
<reference key="6">
    <citation type="submission" date="2004-01" db="PDB data bank">
        <title>Solution structure of the DEP domain of mouse pleckstrin.</title>
        <authorList>
            <consortium name="RIKEN structural genomics initiative (RSGI)"/>
        </authorList>
    </citation>
    <scope>STRUCTURE BY NMR OF 126-223</scope>
</reference>
<dbReference type="EMBL" id="AF181829">
    <property type="protein sequence ID" value="AAF75830.1"/>
    <property type="molecule type" value="mRNA"/>
</dbReference>
<dbReference type="EMBL" id="AF073294">
    <property type="protein sequence ID" value="AAF72039.1"/>
    <property type="molecule type" value="mRNA"/>
</dbReference>
<dbReference type="EMBL" id="AF303745">
    <property type="protein sequence ID" value="AAG29513.1"/>
    <property type="molecule type" value="mRNA"/>
</dbReference>
<dbReference type="EMBL" id="BC066185">
    <property type="protein sequence ID" value="AAH66185.1"/>
    <property type="molecule type" value="mRNA"/>
</dbReference>
<dbReference type="CCDS" id="CCDS24446.1"/>
<dbReference type="RefSeq" id="NP_062422.1">
    <property type="nucleotide sequence ID" value="NM_019549.2"/>
</dbReference>
<dbReference type="PDB" id="1UHW">
    <property type="method" value="NMR"/>
    <property type="chains" value="A=126-221"/>
</dbReference>
<dbReference type="PDBsum" id="1UHW"/>
<dbReference type="SMR" id="Q9JHK5"/>
<dbReference type="BioGRID" id="207832">
    <property type="interactions" value="8"/>
</dbReference>
<dbReference type="FunCoup" id="Q9JHK5">
    <property type="interactions" value="343"/>
</dbReference>
<dbReference type="STRING" id="10090.ENSMUSP00000099945"/>
<dbReference type="iPTMnet" id="Q9JHK5"/>
<dbReference type="PhosphoSitePlus" id="Q9JHK5"/>
<dbReference type="SwissPalm" id="Q9JHK5"/>
<dbReference type="PaxDb" id="10090-ENSMUSP00000099945"/>
<dbReference type="ProteomicsDB" id="288251"/>
<dbReference type="Antibodypedia" id="30933">
    <property type="antibodies" value="471 antibodies from 36 providers"/>
</dbReference>
<dbReference type="DNASU" id="56193"/>
<dbReference type="Ensembl" id="ENSMUST00000102881.10">
    <property type="protein sequence ID" value="ENSMUSP00000099945.4"/>
    <property type="gene ID" value="ENSMUSG00000020120.16"/>
</dbReference>
<dbReference type="GeneID" id="56193"/>
<dbReference type="KEGG" id="mmu:56193"/>
<dbReference type="UCSC" id="uc007ibv.2">
    <property type="organism name" value="mouse"/>
</dbReference>
<dbReference type="AGR" id="MGI:1860485"/>
<dbReference type="CTD" id="5341"/>
<dbReference type="MGI" id="MGI:1860485">
    <property type="gene designation" value="Plek"/>
</dbReference>
<dbReference type="VEuPathDB" id="HostDB:ENSMUSG00000020120"/>
<dbReference type="eggNOG" id="ENOG502QQIA">
    <property type="taxonomic scope" value="Eukaryota"/>
</dbReference>
<dbReference type="GeneTree" id="ENSGT00940000157885"/>
<dbReference type="HOGENOM" id="CLU_067828_0_0_1"/>
<dbReference type="InParanoid" id="Q9JHK5"/>
<dbReference type="OMA" id="GTCVIDW"/>
<dbReference type="OrthoDB" id="185175at2759"/>
<dbReference type="PhylomeDB" id="Q9JHK5"/>
<dbReference type="TreeFam" id="TF332246"/>
<dbReference type="Reactome" id="R-MMU-114608">
    <property type="pathway name" value="Platelet degranulation"/>
</dbReference>
<dbReference type="BioGRID-ORCS" id="56193">
    <property type="hits" value="2 hits in 76 CRISPR screens"/>
</dbReference>
<dbReference type="ChiTaRS" id="Plek">
    <property type="organism name" value="mouse"/>
</dbReference>
<dbReference type="EvolutionaryTrace" id="Q9JHK5"/>
<dbReference type="PRO" id="PR:Q9JHK5"/>
<dbReference type="Proteomes" id="UP000000589">
    <property type="component" value="Chromosome 11"/>
</dbReference>
<dbReference type="RNAct" id="Q9JHK5">
    <property type="molecule type" value="protein"/>
</dbReference>
<dbReference type="Bgee" id="ENSMUSG00000020120">
    <property type="expression patterns" value="Expressed in blood and 227 other cell types or tissues"/>
</dbReference>
<dbReference type="ExpressionAtlas" id="Q9JHK5">
    <property type="expression patterns" value="baseline and differential"/>
</dbReference>
<dbReference type="GO" id="GO:0005737">
    <property type="term" value="C:cytoplasm"/>
    <property type="evidence" value="ECO:0007669"/>
    <property type="project" value="Ensembl"/>
</dbReference>
<dbReference type="GO" id="GO:0032587">
    <property type="term" value="C:ruffle membrane"/>
    <property type="evidence" value="ECO:0007669"/>
    <property type="project" value="Ensembl"/>
</dbReference>
<dbReference type="GO" id="GO:0043325">
    <property type="term" value="F:phosphatidylinositol-3,4-bisphosphate binding"/>
    <property type="evidence" value="ECO:0007669"/>
    <property type="project" value="Ensembl"/>
</dbReference>
<dbReference type="GO" id="GO:0042803">
    <property type="term" value="F:protein homodimerization activity"/>
    <property type="evidence" value="ECO:0007669"/>
    <property type="project" value="Ensembl"/>
</dbReference>
<dbReference type="GO" id="GO:0005080">
    <property type="term" value="F:protein kinase C binding"/>
    <property type="evidence" value="ECO:0007669"/>
    <property type="project" value="Ensembl"/>
</dbReference>
<dbReference type="GO" id="GO:0030866">
    <property type="term" value="P:cortical actin cytoskeleton organization"/>
    <property type="evidence" value="ECO:0007669"/>
    <property type="project" value="Ensembl"/>
</dbReference>
<dbReference type="GO" id="GO:0002244">
    <property type="term" value="P:hematopoietic progenitor cell differentiation"/>
    <property type="evidence" value="ECO:0007669"/>
    <property type="project" value="Ensembl"/>
</dbReference>
<dbReference type="GO" id="GO:0007229">
    <property type="term" value="P:integrin-mediated signaling pathway"/>
    <property type="evidence" value="ECO:0007669"/>
    <property type="project" value="Ensembl"/>
</dbReference>
<dbReference type="GO" id="GO:0035556">
    <property type="term" value="P:intracellular signal transduction"/>
    <property type="evidence" value="ECO:0007669"/>
    <property type="project" value="InterPro"/>
</dbReference>
<dbReference type="GO" id="GO:0010920">
    <property type="term" value="P:negative regulation of inositol phosphate biosynthetic process"/>
    <property type="evidence" value="ECO:0007669"/>
    <property type="project" value="Ensembl"/>
</dbReference>
<dbReference type="GO" id="GO:0070495">
    <property type="term" value="P:negative regulation of thrombin-activated receptor signaling pathway"/>
    <property type="evidence" value="ECO:0007669"/>
    <property type="project" value="Ensembl"/>
</dbReference>
<dbReference type="GO" id="GO:0007200">
    <property type="term" value="P:phospholipase C-activating G protein-coupled receptor signaling pathway"/>
    <property type="evidence" value="ECO:0000315"/>
    <property type="project" value="BHF-UCL"/>
</dbReference>
<dbReference type="GO" id="GO:0030845">
    <property type="term" value="P:phospholipase C-inhibiting G protein-coupled receptor signaling pathway"/>
    <property type="evidence" value="ECO:0007669"/>
    <property type="project" value="Ensembl"/>
</dbReference>
<dbReference type="GO" id="GO:0070527">
    <property type="term" value="P:platelet aggregation"/>
    <property type="evidence" value="ECO:0000315"/>
    <property type="project" value="BHF-UCL"/>
</dbReference>
<dbReference type="GO" id="GO:0032233">
    <property type="term" value="P:positive regulation of actin filament bundle assembly"/>
    <property type="evidence" value="ECO:0007669"/>
    <property type="project" value="Ensembl"/>
</dbReference>
<dbReference type="GO" id="GO:0030836">
    <property type="term" value="P:positive regulation of actin filament depolymerization"/>
    <property type="evidence" value="ECO:0000315"/>
    <property type="project" value="BHF-UCL"/>
</dbReference>
<dbReference type="GO" id="GO:0033625">
    <property type="term" value="P:positive regulation of integrin activation"/>
    <property type="evidence" value="ECO:0000315"/>
    <property type="project" value="BHF-UCL"/>
</dbReference>
<dbReference type="GO" id="GO:0010572">
    <property type="term" value="P:positive regulation of platelet activation"/>
    <property type="evidence" value="ECO:0000315"/>
    <property type="project" value="BHF-UCL"/>
</dbReference>
<dbReference type="GO" id="GO:0070560">
    <property type="term" value="P:protein secretion by platelet"/>
    <property type="evidence" value="ECO:0000315"/>
    <property type="project" value="BHF-UCL"/>
</dbReference>
<dbReference type="GO" id="GO:0060305">
    <property type="term" value="P:regulation of cell diameter"/>
    <property type="evidence" value="ECO:0007669"/>
    <property type="project" value="Ensembl"/>
</dbReference>
<dbReference type="GO" id="GO:0031529">
    <property type="term" value="P:ruffle organization"/>
    <property type="evidence" value="ECO:0007669"/>
    <property type="project" value="Ensembl"/>
</dbReference>
<dbReference type="GO" id="GO:0070493">
    <property type="term" value="P:thrombin-activated receptor signaling pathway"/>
    <property type="evidence" value="ECO:0000315"/>
    <property type="project" value="BHF-UCL"/>
</dbReference>
<dbReference type="GO" id="GO:0006904">
    <property type="term" value="P:vesicle docking involved in exocytosis"/>
    <property type="evidence" value="ECO:0000315"/>
    <property type="project" value="BHF-UCL"/>
</dbReference>
<dbReference type="CDD" id="cd04445">
    <property type="entry name" value="DEP_PLEK1"/>
    <property type="match status" value="1"/>
</dbReference>
<dbReference type="CDD" id="cd13301">
    <property type="entry name" value="PH1_Pleckstrin_2"/>
    <property type="match status" value="1"/>
</dbReference>
<dbReference type="CDD" id="cd13302">
    <property type="entry name" value="PH2_Pleckstrin_2"/>
    <property type="match status" value="1"/>
</dbReference>
<dbReference type="FunFam" id="1.10.10.10:FF:000269">
    <property type="entry name" value="Pleckstrin"/>
    <property type="match status" value="1"/>
</dbReference>
<dbReference type="FunFam" id="2.30.29.30:FF:000223">
    <property type="entry name" value="Pleckstrin"/>
    <property type="match status" value="1"/>
</dbReference>
<dbReference type="FunFam" id="2.30.29.30:FF:000226">
    <property type="entry name" value="Pleckstrin"/>
    <property type="match status" value="1"/>
</dbReference>
<dbReference type="Gene3D" id="2.30.29.30">
    <property type="entry name" value="Pleckstrin-homology domain (PH domain)/Phosphotyrosine-binding domain (PTB)"/>
    <property type="match status" value="2"/>
</dbReference>
<dbReference type="Gene3D" id="1.10.10.10">
    <property type="entry name" value="Winged helix-like DNA-binding domain superfamily/Winged helix DNA-binding domain"/>
    <property type="match status" value="1"/>
</dbReference>
<dbReference type="InterPro" id="IPR000591">
    <property type="entry name" value="DEP_dom"/>
</dbReference>
<dbReference type="InterPro" id="IPR011993">
    <property type="entry name" value="PH-like_dom_sf"/>
</dbReference>
<dbReference type="InterPro" id="IPR001849">
    <property type="entry name" value="PH_domain"/>
</dbReference>
<dbReference type="InterPro" id="IPR037370">
    <property type="entry name" value="Pleckstrin"/>
</dbReference>
<dbReference type="InterPro" id="IPR037371">
    <property type="entry name" value="PLEK_DEP"/>
</dbReference>
<dbReference type="InterPro" id="IPR036388">
    <property type="entry name" value="WH-like_DNA-bd_sf"/>
</dbReference>
<dbReference type="InterPro" id="IPR036390">
    <property type="entry name" value="WH_DNA-bd_sf"/>
</dbReference>
<dbReference type="PANTHER" id="PTHR12092">
    <property type="entry name" value="PLECKSTRIN"/>
    <property type="match status" value="1"/>
</dbReference>
<dbReference type="PANTHER" id="PTHR12092:SF1">
    <property type="entry name" value="PLECKSTRIN"/>
    <property type="match status" value="1"/>
</dbReference>
<dbReference type="Pfam" id="PF00610">
    <property type="entry name" value="DEP"/>
    <property type="match status" value="1"/>
</dbReference>
<dbReference type="Pfam" id="PF00169">
    <property type="entry name" value="PH"/>
    <property type="match status" value="2"/>
</dbReference>
<dbReference type="SMART" id="SM00049">
    <property type="entry name" value="DEP"/>
    <property type="match status" value="1"/>
</dbReference>
<dbReference type="SMART" id="SM00233">
    <property type="entry name" value="PH"/>
    <property type="match status" value="2"/>
</dbReference>
<dbReference type="SUPFAM" id="SSF50729">
    <property type="entry name" value="PH domain-like"/>
    <property type="match status" value="2"/>
</dbReference>
<dbReference type="SUPFAM" id="SSF46785">
    <property type="entry name" value="Winged helix' DNA-binding domain"/>
    <property type="match status" value="1"/>
</dbReference>
<dbReference type="PROSITE" id="PS50186">
    <property type="entry name" value="DEP"/>
    <property type="match status" value="1"/>
</dbReference>
<dbReference type="PROSITE" id="PS50003">
    <property type="entry name" value="PH_DOMAIN"/>
    <property type="match status" value="2"/>
</dbReference>
<feature type="chain" id="PRO_0000053860" description="Pleckstrin">
    <location>
        <begin position="1"/>
        <end position="350"/>
    </location>
</feature>
<feature type="domain" description="PH 1" evidence="3">
    <location>
        <begin position="4"/>
        <end position="101"/>
    </location>
</feature>
<feature type="domain" description="DEP" evidence="2">
    <location>
        <begin position="136"/>
        <end position="221"/>
    </location>
</feature>
<feature type="domain" description="PH 2" evidence="3">
    <location>
        <begin position="244"/>
        <end position="347"/>
    </location>
</feature>
<feature type="modified residue" description="N6-acetyllysine" evidence="1">
    <location>
        <position position="64"/>
    </location>
</feature>
<feature type="modified residue" description="Phosphoserine" evidence="1">
    <location>
        <position position="113"/>
    </location>
</feature>
<feature type="modified residue" description="Phosphoserine" evidence="5">
    <location>
        <position position="117"/>
    </location>
</feature>
<feature type="sequence conflict" description="In Ref. 3; AAG29513." evidence="4" ref="3">
    <original>L</original>
    <variation>Q</variation>
    <location>
        <position position="120"/>
    </location>
</feature>
<feature type="sequence conflict" description="In Ref. 3; AAG29513." evidence="4" ref="3">
    <original>F</original>
    <variation>L</variation>
    <location>
        <position position="225"/>
    </location>
</feature>
<feature type="helix" evidence="6">
    <location>
        <begin position="126"/>
        <end position="134"/>
    </location>
</feature>
<feature type="turn" evidence="6">
    <location>
        <begin position="136"/>
        <end position="138"/>
    </location>
</feature>
<feature type="strand" evidence="6">
    <location>
        <begin position="143"/>
        <end position="149"/>
    </location>
</feature>
<feature type="strand" evidence="6">
    <location>
        <begin position="151"/>
        <end position="155"/>
    </location>
</feature>
<feature type="helix" evidence="6">
    <location>
        <begin position="158"/>
        <end position="168"/>
    </location>
</feature>
<feature type="strand" evidence="6">
    <location>
        <begin position="170"/>
        <end position="173"/>
    </location>
</feature>
<feature type="helix" evidence="6">
    <location>
        <begin position="174"/>
        <end position="187"/>
    </location>
</feature>
<feature type="strand" evidence="6">
    <location>
        <begin position="189"/>
        <end position="192"/>
    </location>
</feature>
<feature type="strand" evidence="6">
    <location>
        <begin position="194"/>
        <end position="196"/>
    </location>
</feature>
<feature type="helix" evidence="6">
    <location>
        <begin position="197"/>
        <end position="203"/>
    </location>
</feature>
<feature type="strand" evidence="6">
    <location>
        <begin position="204"/>
        <end position="206"/>
    </location>
</feature>
<comment type="function">
    <text>Major protein kinase C substrate of platelets.</text>
</comment>
<name>PLEK_MOUSE</name>
<sequence>MEPKRIREGYLVKKGSVFNTWKPMWVVLLEDGIEFYKKKSDNSPKGMIPLKGSTLTSPCQDFGKRMFVLKITTTKQQDHFFQAAFLEERDAWVRDIKKAIKCIEGGQKFARKSTRRSIRLPETIDLGALYLSMKDPEKGIKELNLEKDKKVFNHCLTGSGVIDWLVSNKLVRNRQEGLMISASLLSEGYLQPAGDLSKNAADGIAENPFLDSPDAFYYFPDSGFFCEENSSDDDVILREEFRGVIIKQGCLLKQGHRRKNWKVRKFILREDPAYLHYYDPAGGEDPLGAVHLRGCVVTSVESSHDVKKSDEENLFEIITADEVHYYLQAATSKERTEWIKAIQVASRTGK</sequence>
<gene>
    <name type="primary">Plek</name>
</gene>
<evidence type="ECO:0000250" key="1">
    <source>
        <dbReference type="UniProtKB" id="P08567"/>
    </source>
</evidence>
<evidence type="ECO:0000255" key="2">
    <source>
        <dbReference type="PROSITE-ProRule" id="PRU00066"/>
    </source>
</evidence>
<evidence type="ECO:0000255" key="3">
    <source>
        <dbReference type="PROSITE-ProRule" id="PRU00145"/>
    </source>
</evidence>
<evidence type="ECO:0000305" key="4"/>
<evidence type="ECO:0007744" key="5">
    <source>
    </source>
</evidence>
<evidence type="ECO:0007829" key="6">
    <source>
        <dbReference type="PDB" id="1UHW"/>
    </source>
</evidence>
<protein>
    <recommendedName>
        <fullName>Pleckstrin</fullName>
    </recommendedName>
</protein>
<keyword id="KW-0002">3D-structure</keyword>
<keyword id="KW-0007">Acetylation</keyword>
<keyword id="KW-0597">Phosphoprotein</keyword>
<keyword id="KW-1185">Reference proteome</keyword>
<keyword id="KW-0677">Repeat</keyword>